<gene>
    <name evidence="1" type="primary">trpF</name>
    <name type="ordered locus">lpg1303</name>
</gene>
<name>TRPF_LEGPH</name>
<evidence type="ECO:0000255" key="1">
    <source>
        <dbReference type="HAMAP-Rule" id="MF_00135"/>
    </source>
</evidence>
<proteinExistence type="inferred from homology"/>
<protein>
    <recommendedName>
        <fullName evidence="1">N-(5'-phosphoribosyl)anthranilate isomerase</fullName>
        <shortName evidence="1">PRAI</shortName>
        <ecNumber evidence="1">5.3.1.24</ecNumber>
    </recommendedName>
</protein>
<sequence length="207" mass="23046">MNPSRIRIKMCGMTRSEDIQYAIDLGVDAIGLIFYPKSVRNVSLEKARIIVNNIPPFVDIVAVLVNPEQSFVQLIINEIPVQLLQFHGEESSEFCRQFNKPFIKAIHPKTAIQIQSAVDEFFDASAILLDTPSDKERGGTGLTFDWNIIPENLSKPYILAGGLNESNILEAITMCHPYAVDVCSGIEASPGVKDHLKMSRFIKAIWG</sequence>
<organism>
    <name type="scientific">Legionella pneumophila subsp. pneumophila (strain Philadelphia 1 / ATCC 33152 / DSM 7513)</name>
    <dbReference type="NCBI Taxonomy" id="272624"/>
    <lineage>
        <taxon>Bacteria</taxon>
        <taxon>Pseudomonadati</taxon>
        <taxon>Pseudomonadota</taxon>
        <taxon>Gammaproteobacteria</taxon>
        <taxon>Legionellales</taxon>
        <taxon>Legionellaceae</taxon>
        <taxon>Legionella</taxon>
    </lineage>
</organism>
<accession>Q5ZVY5</accession>
<keyword id="KW-0028">Amino-acid biosynthesis</keyword>
<keyword id="KW-0057">Aromatic amino acid biosynthesis</keyword>
<keyword id="KW-0413">Isomerase</keyword>
<keyword id="KW-1185">Reference proteome</keyword>
<keyword id="KW-0822">Tryptophan biosynthesis</keyword>
<comment type="catalytic activity">
    <reaction evidence="1">
        <text>N-(5-phospho-beta-D-ribosyl)anthranilate = 1-(2-carboxyphenylamino)-1-deoxy-D-ribulose 5-phosphate</text>
        <dbReference type="Rhea" id="RHEA:21540"/>
        <dbReference type="ChEBI" id="CHEBI:18277"/>
        <dbReference type="ChEBI" id="CHEBI:58613"/>
        <dbReference type="EC" id="5.3.1.24"/>
    </reaction>
</comment>
<comment type="pathway">
    <text evidence="1">Amino-acid biosynthesis; L-tryptophan biosynthesis; L-tryptophan from chorismate: step 3/5.</text>
</comment>
<comment type="similarity">
    <text evidence="1">Belongs to the TrpF family.</text>
</comment>
<dbReference type="EC" id="5.3.1.24" evidence="1"/>
<dbReference type="EMBL" id="AE017354">
    <property type="protein sequence ID" value="AAU27386.1"/>
    <property type="molecule type" value="Genomic_DNA"/>
</dbReference>
<dbReference type="RefSeq" id="WP_010947034.1">
    <property type="nucleotide sequence ID" value="NC_002942.5"/>
</dbReference>
<dbReference type="RefSeq" id="YP_095333.1">
    <property type="nucleotide sequence ID" value="NC_002942.5"/>
</dbReference>
<dbReference type="SMR" id="Q5ZVY5"/>
<dbReference type="STRING" id="272624.lpg1303"/>
<dbReference type="PaxDb" id="272624-lpg1303"/>
<dbReference type="KEGG" id="lpn:lpg1303"/>
<dbReference type="PATRIC" id="fig|272624.6.peg.1373"/>
<dbReference type="eggNOG" id="COG0135">
    <property type="taxonomic scope" value="Bacteria"/>
</dbReference>
<dbReference type="HOGENOM" id="CLU_076364_2_0_6"/>
<dbReference type="OrthoDB" id="9804217at2"/>
<dbReference type="UniPathway" id="UPA00035">
    <property type="reaction ID" value="UER00042"/>
</dbReference>
<dbReference type="Proteomes" id="UP000000609">
    <property type="component" value="Chromosome"/>
</dbReference>
<dbReference type="GO" id="GO:0004640">
    <property type="term" value="F:phosphoribosylanthranilate isomerase activity"/>
    <property type="evidence" value="ECO:0007669"/>
    <property type="project" value="UniProtKB-UniRule"/>
</dbReference>
<dbReference type="GO" id="GO:0000162">
    <property type="term" value="P:L-tryptophan biosynthetic process"/>
    <property type="evidence" value="ECO:0007669"/>
    <property type="project" value="UniProtKB-UniRule"/>
</dbReference>
<dbReference type="CDD" id="cd00405">
    <property type="entry name" value="PRAI"/>
    <property type="match status" value="1"/>
</dbReference>
<dbReference type="FunFam" id="3.20.20.70:FF:000075">
    <property type="entry name" value="Tryptophan biosynthesis protein TRP1"/>
    <property type="match status" value="1"/>
</dbReference>
<dbReference type="Gene3D" id="3.20.20.70">
    <property type="entry name" value="Aldolase class I"/>
    <property type="match status" value="1"/>
</dbReference>
<dbReference type="HAMAP" id="MF_00135">
    <property type="entry name" value="PRAI"/>
    <property type="match status" value="1"/>
</dbReference>
<dbReference type="InterPro" id="IPR013785">
    <property type="entry name" value="Aldolase_TIM"/>
</dbReference>
<dbReference type="InterPro" id="IPR001240">
    <property type="entry name" value="PRAI_dom"/>
</dbReference>
<dbReference type="InterPro" id="IPR011060">
    <property type="entry name" value="RibuloseP-bd_barrel"/>
</dbReference>
<dbReference type="InterPro" id="IPR044643">
    <property type="entry name" value="TrpF_fam"/>
</dbReference>
<dbReference type="NCBIfam" id="NF002298">
    <property type="entry name" value="PRK01222.1-4"/>
    <property type="match status" value="1"/>
</dbReference>
<dbReference type="PANTHER" id="PTHR42894">
    <property type="entry name" value="N-(5'-PHOSPHORIBOSYL)ANTHRANILATE ISOMERASE"/>
    <property type="match status" value="1"/>
</dbReference>
<dbReference type="PANTHER" id="PTHR42894:SF1">
    <property type="entry name" value="N-(5'-PHOSPHORIBOSYL)ANTHRANILATE ISOMERASE"/>
    <property type="match status" value="1"/>
</dbReference>
<dbReference type="Pfam" id="PF00697">
    <property type="entry name" value="PRAI"/>
    <property type="match status" value="1"/>
</dbReference>
<dbReference type="SUPFAM" id="SSF51366">
    <property type="entry name" value="Ribulose-phoshate binding barrel"/>
    <property type="match status" value="1"/>
</dbReference>
<feature type="chain" id="PRO_1000018603" description="N-(5'-phosphoribosyl)anthranilate isomerase">
    <location>
        <begin position="1"/>
        <end position="207"/>
    </location>
</feature>
<reference key="1">
    <citation type="journal article" date="2004" name="Science">
        <title>The genomic sequence of the accidental pathogen Legionella pneumophila.</title>
        <authorList>
            <person name="Chien M."/>
            <person name="Morozova I."/>
            <person name="Shi S."/>
            <person name="Sheng H."/>
            <person name="Chen J."/>
            <person name="Gomez S.M."/>
            <person name="Asamani G."/>
            <person name="Hill K."/>
            <person name="Nuara J."/>
            <person name="Feder M."/>
            <person name="Rineer J."/>
            <person name="Greenberg J.J."/>
            <person name="Steshenko V."/>
            <person name="Park S.H."/>
            <person name="Zhao B."/>
            <person name="Teplitskaya E."/>
            <person name="Edwards J.R."/>
            <person name="Pampou S."/>
            <person name="Georghiou A."/>
            <person name="Chou I.-C."/>
            <person name="Iannuccilli W."/>
            <person name="Ulz M.E."/>
            <person name="Kim D.H."/>
            <person name="Geringer-Sameth A."/>
            <person name="Goldsberry C."/>
            <person name="Morozov P."/>
            <person name="Fischer S.G."/>
            <person name="Segal G."/>
            <person name="Qu X."/>
            <person name="Rzhetsky A."/>
            <person name="Zhang P."/>
            <person name="Cayanis E."/>
            <person name="De Jong P.J."/>
            <person name="Ju J."/>
            <person name="Kalachikov S."/>
            <person name="Shuman H.A."/>
            <person name="Russo J.J."/>
        </authorList>
    </citation>
    <scope>NUCLEOTIDE SEQUENCE [LARGE SCALE GENOMIC DNA]</scope>
    <source>
        <strain>Philadelphia 1 / ATCC 33152 / DSM 7513</strain>
    </source>
</reference>